<protein>
    <recommendedName>
        <fullName>rRNA 2'-O-methyltransferase fibrillarin</fullName>
        <ecNumber evidence="2">2.1.1.-</ecNumber>
    </recommendedName>
    <alternativeName>
        <fullName>Histone-glutamine methyltransferase</fullName>
    </alternativeName>
</protein>
<name>FBRL_CAEEL</name>
<feature type="chain" id="PRO_0000148511" description="rRNA 2'-O-methyltransferase fibrillarin">
    <location>
        <begin position="1"/>
        <end position="352"/>
    </location>
</feature>
<feature type="region of interest" description="Disordered" evidence="3">
    <location>
        <begin position="1"/>
        <end position="115"/>
    </location>
</feature>
<feature type="compositionally biased region" description="Gly residues" evidence="3">
    <location>
        <begin position="8"/>
        <end position="18"/>
    </location>
</feature>
<feature type="compositionally biased region" description="Gly residues" evidence="3">
    <location>
        <begin position="26"/>
        <end position="59"/>
    </location>
</feature>
<feature type="compositionally biased region" description="Gly residues" evidence="3">
    <location>
        <begin position="66"/>
        <end position="113"/>
    </location>
</feature>
<feature type="binding site" evidence="1">
    <location>
        <begin position="203"/>
        <end position="204"/>
    </location>
    <ligand>
        <name>S-adenosyl-L-methionine</name>
        <dbReference type="ChEBI" id="CHEBI:59789"/>
    </ligand>
</feature>
<feature type="binding site" evidence="1">
    <location>
        <begin position="222"/>
        <end position="223"/>
    </location>
    <ligand>
        <name>S-adenosyl-L-methionine</name>
        <dbReference type="ChEBI" id="CHEBI:59789"/>
    </ligand>
</feature>
<feature type="binding site" evidence="1">
    <location>
        <begin position="247"/>
        <end position="248"/>
    </location>
    <ligand>
        <name>S-adenosyl-L-methionine</name>
        <dbReference type="ChEBI" id="CHEBI:59789"/>
    </ligand>
</feature>
<feature type="binding site" evidence="1">
    <location>
        <begin position="267"/>
        <end position="270"/>
    </location>
    <ligand>
        <name>S-adenosyl-L-methionine</name>
        <dbReference type="ChEBI" id="CHEBI:59789"/>
    </ligand>
</feature>
<feature type="modified residue" description="Asymmetric dimethylarginine" evidence="1">
    <location>
        <position position="8"/>
    </location>
</feature>
<feature type="modified residue" description="Asymmetric dimethylarginine" evidence="1">
    <location>
        <position position="16"/>
    </location>
</feature>
<feature type="modified residue" description="Asymmetric dimethylarginine" evidence="1">
    <location>
        <position position="19"/>
    </location>
</feature>
<feature type="modified residue" description="Asymmetric dimethylarginine" evidence="1">
    <location>
        <position position="23"/>
    </location>
</feature>
<feature type="modified residue" description="Asymmetric dimethylarginine" evidence="1">
    <location>
        <position position="27"/>
    </location>
</feature>
<feature type="modified residue" description="Asymmetric dimethylarginine" evidence="1">
    <location>
        <position position="35"/>
    </location>
</feature>
<feature type="modified residue" description="Asymmetric dimethylarginine" evidence="1">
    <location>
        <position position="43"/>
    </location>
</feature>
<feature type="modified residue" description="Asymmetric dimethylarginine" evidence="1">
    <location>
        <position position="51"/>
    </location>
</feature>
<feature type="modified residue" description="Asymmetric dimethylarginine" evidence="1">
    <location>
        <position position="55"/>
    </location>
</feature>
<feature type="modified residue" description="Asymmetric dimethylarginine" evidence="1">
    <location>
        <position position="58"/>
    </location>
</feature>
<feature type="modified residue" description="Asymmetric dimethylarginine" evidence="1">
    <location>
        <position position="63"/>
    </location>
</feature>
<feature type="modified residue" description="Asymmetric dimethylarginine" evidence="1">
    <location>
        <position position="67"/>
    </location>
</feature>
<feature type="modified residue" description="Asymmetric dimethylarginine" evidence="1">
    <location>
        <position position="70"/>
    </location>
</feature>
<feature type="modified residue" description="Asymmetric dimethylarginine" evidence="1">
    <location>
        <position position="75"/>
    </location>
</feature>
<feature type="modified residue" description="Asymmetric dimethylarginine" evidence="1">
    <location>
        <position position="81"/>
    </location>
</feature>
<feature type="modified residue" description="Asymmetric dimethylarginine" evidence="1">
    <location>
        <position position="85"/>
    </location>
</feature>
<feature type="modified residue" description="Asymmetric dimethylarginine" evidence="1">
    <location>
        <position position="91"/>
    </location>
</feature>
<feature type="modified residue" description="Asymmetric dimethylarginine" evidence="1">
    <location>
        <position position="95"/>
    </location>
</feature>
<feature type="modified residue" description="Asymmetric dimethylarginine" evidence="1">
    <location>
        <position position="98"/>
    </location>
</feature>
<feature type="modified residue" description="Asymmetric dimethylarginine" evidence="1">
    <location>
        <position position="102"/>
    </location>
</feature>
<feature type="modified residue" description="Asymmetric dimethylarginine" evidence="1">
    <location>
        <position position="105"/>
    </location>
</feature>
<feature type="modified residue" description="Asymmetric dimethylarginine" evidence="1">
    <location>
        <position position="112"/>
    </location>
</feature>
<evidence type="ECO:0000250" key="1"/>
<evidence type="ECO:0000250" key="2">
    <source>
        <dbReference type="UniProtKB" id="P15646"/>
    </source>
</evidence>
<evidence type="ECO:0000256" key="3">
    <source>
        <dbReference type="SAM" id="MobiDB-lite"/>
    </source>
</evidence>
<evidence type="ECO:0000269" key="4">
    <source>
    </source>
</evidence>
<evidence type="ECO:0000269" key="5">
    <source>
    </source>
</evidence>
<evidence type="ECO:0000269" key="6">
    <source>
    </source>
</evidence>
<evidence type="ECO:0000305" key="7"/>
<evidence type="ECO:0000312" key="8">
    <source>
        <dbReference type="WormBase" id="T01C3.7"/>
    </source>
</evidence>
<gene>
    <name evidence="8" type="primary">fib-1</name>
    <name evidence="8" type="ORF">T01C3.7</name>
</gene>
<proteinExistence type="evidence at transcript level"/>
<sequence length="352" mass="36383">MGRPEFNRGGGGGGFRGGRGGDRGGSRGGFGGGGRGGYGGGDRGSFGGGDRGGFRGGRGGGDRGGFRGGRGGGDRGGFGGRGSPRGGFGGRGSPRGGRGSPRGGRGGAGGMRGGKTVVVEPHRLGGVFIVKGKEDALATKNMVVGESVYGEKRVSVDDGAGSIEYRVWNPFRSKLAASIMGGLENTHIKPGTKLLYLGAASGTTVSHCSDVVGPEGIVYAVEFSHRSGRDLLGVAKKRPNVVPIVEDARHPHKYRMLVGMVDVIFSDVAQPDQARIVALNAQNFLRNGGHAVISIKANCIDSTAEPEAVFAGEVNKLKEEKFKPLEQVTLEPYERDHAVVVAVYRPVKGKKV</sequence>
<organism>
    <name type="scientific">Caenorhabditis elegans</name>
    <dbReference type="NCBI Taxonomy" id="6239"/>
    <lineage>
        <taxon>Eukaryota</taxon>
        <taxon>Metazoa</taxon>
        <taxon>Ecdysozoa</taxon>
        <taxon>Nematoda</taxon>
        <taxon>Chromadorea</taxon>
        <taxon>Rhabditida</taxon>
        <taxon>Rhabditina</taxon>
        <taxon>Rhabditomorpha</taxon>
        <taxon>Rhabditoidea</taxon>
        <taxon>Rhabditidae</taxon>
        <taxon>Peloderinae</taxon>
        <taxon>Caenorhabditis</taxon>
    </lineage>
</organism>
<accession>Q22053</accession>
<dbReference type="EC" id="2.1.1.-" evidence="2"/>
<dbReference type="EMBL" id="BX284605">
    <property type="protein sequence ID" value="CAB01657.1"/>
    <property type="molecule type" value="Genomic_DNA"/>
</dbReference>
<dbReference type="PIR" id="T24279">
    <property type="entry name" value="T24279"/>
</dbReference>
<dbReference type="RefSeq" id="NP_506691.1">
    <property type="nucleotide sequence ID" value="NM_074290.7"/>
</dbReference>
<dbReference type="SMR" id="Q22053"/>
<dbReference type="BioGRID" id="44995">
    <property type="interactions" value="56"/>
</dbReference>
<dbReference type="DIP" id="DIP-26332N"/>
<dbReference type="FunCoup" id="Q22053">
    <property type="interactions" value="1894"/>
</dbReference>
<dbReference type="STRING" id="6239.T01C3.7.2"/>
<dbReference type="iPTMnet" id="Q22053"/>
<dbReference type="PaxDb" id="6239-T01C3.7.1"/>
<dbReference type="PeptideAtlas" id="Q22053"/>
<dbReference type="EnsemblMetazoa" id="T01C3.7.1">
    <property type="protein sequence ID" value="T01C3.7.1"/>
    <property type="gene ID" value="WBGene00001423"/>
</dbReference>
<dbReference type="EnsemblMetazoa" id="T01C3.7.2">
    <property type="protein sequence ID" value="T01C3.7.2"/>
    <property type="gene ID" value="WBGene00001423"/>
</dbReference>
<dbReference type="GeneID" id="179999"/>
<dbReference type="KEGG" id="cel:CELE_T01C3.7"/>
<dbReference type="UCSC" id="T01C3.7.1">
    <property type="organism name" value="c. elegans"/>
</dbReference>
<dbReference type="AGR" id="WB:WBGene00001423"/>
<dbReference type="CTD" id="179999"/>
<dbReference type="WormBase" id="T01C3.7">
    <property type="protein sequence ID" value="CE12920"/>
    <property type="gene ID" value="WBGene00001423"/>
    <property type="gene designation" value="fib-1"/>
</dbReference>
<dbReference type="eggNOG" id="KOG1596">
    <property type="taxonomic scope" value="Eukaryota"/>
</dbReference>
<dbReference type="GeneTree" id="ENSGT00550000074792"/>
<dbReference type="HOGENOM" id="CLU_059055_1_0_1"/>
<dbReference type="InParanoid" id="Q22053"/>
<dbReference type="OMA" id="WNPNKSK"/>
<dbReference type="OrthoDB" id="1859733at2759"/>
<dbReference type="PhylomeDB" id="Q22053"/>
<dbReference type="Reactome" id="R-CEL-6791226">
    <property type="pathway name" value="Major pathway of rRNA processing in the nucleolus and cytosol"/>
</dbReference>
<dbReference type="CD-CODE" id="3743B201">
    <property type="entry name" value="Nucleolus"/>
</dbReference>
<dbReference type="CD-CODE" id="BCA0D336">
    <property type="entry name" value="Dense fibrillar component"/>
</dbReference>
<dbReference type="CD-CODE" id="CB5A3F31">
    <property type="entry name" value="Synthetic Condensate 000041"/>
</dbReference>
<dbReference type="CD-CODE" id="D551D4B1">
    <property type="entry name" value="Synthetic Condensate 000051"/>
</dbReference>
<dbReference type="CD-CODE" id="EE0382A7">
    <property type="entry name" value="P-body"/>
</dbReference>
<dbReference type="CD-CODE" id="F3630F2C">
    <property type="entry name" value="Nuclear body"/>
</dbReference>
<dbReference type="PRO" id="PR:Q22053"/>
<dbReference type="Proteomes" id="UP000001940">
    <property type="component" value="Chromosome V"/>
</dbReference>
<dbReference type="Bgee" id="WBGene00001423">
    <property type="expression patterns" value="Expressed in germ line (C elegans) and 4 other cell types or tissues"/>
</dbReference>
<dbReference type="GO" id="GO:0031428">
    <property type="term" value="C:box C/D methylation guide snoRNP complex"/>
    <property type="evidence" value="ECO:0000318"/>
    <property type="project" value="GO_Central"/>
</dbReference>
<dbReference type="GO" id="GO:0015030">
    <property type="term" value="C:Cajal body"/>
    <property type="evidence" value="ECO:0000318"/>
    <property type="project" value="GO_Central"/>
</dbReference>
<dbReference type="GO" id="GO:0005730">
    <property type="term" value="C:nucleolus"/>
    <property type="evidence" value="ECO:0000314"/>
    <property type="project" value="WormBase"/>
</dbReference>
<dbReference type="GO" id="GO:0005654">
    <property type="term" value="C:nucleoplasm"/>
    <property type="evidence" value="ECO:0000314"/>
    <property type="project" value="WormBase"/>
</dbReference>
<dbReference type="GO" id="GO:0032040">
    <property type="term" value="C:small-subunit processome"/>
    <property type="evidence" value="ECO:0000318"/>
    <property type="project" value="GO_Central"/>
</dbReference>
<dbReference type="GO" id="GO:1990259">
    <property type="term" value="F:histone H2AQ104 methyltransferase activity"/>
    <property type="evidence" value="ECO:0000318"/>
    <property type="project" value="GO_Central"/>
</dbReference>
<dbReference type="GO" id="GO:0003723">
    <property type="term" value="F:RNA binding"/>
    <property type="evidence" value="ECO:0000318"/>
    <property type="project" value="GO_Central"/>
</dbReference>
<dbReference type="GO" id="GO:0008649">
    <property type="term" value="F:rRNA methyltransferase activity"/>
    <property type="evidence" value="ECO:0000318"/>
    <property type="project" value="GO_Central"/>
</dbReference>
<dbReference type="GO" id="GO:0000494">
    <property type="term" value="P:box C/D sno(s)RNA 3'-end processing"/>
    <property type="evidence" value="ECO:0000318"/>
    <property type="project" value="GO_Central"/>
</dbReference>
<dbReference type="GO" id="GO:0017126">
    <property type="term" value="P:nucleologenesis"/>
    <property type="evidence" value="ECO:0000315"/>
    <property type="project" value="UniProtKB"/>
</dbReference>
<dbReference type="GO" id="GO:0045727">
    <property type="term" value="P:positive regulation of translation"/>
    <property type="evidence" value="ECO:0000315"/>
    <property type="project" value="WormBase"/>
</dbReference>
<dbReference type="GO" id="GO:0031167">
    <property type="term" value="P:rRNA methylation"/>
    <property type="evidence" value="ECO:0000318"/>
    <property type="project" value="GO_Central"/>
</dbReference>
<dbReference type="FunFam" id="3.30.200.20:FF:000056">
    <property type="entry name" value="Fibrillarin like 1"/>
    <property type="match status" value="1"/>
</dbReference>
<dbReference type="FunFam" id="3.40.50.150:FF:000001">
    <property type="entry name" value="Fibrillarin like 1"/>
    <property type="match status" value="1"/>
</dbReference>
<dbReference type="Gene3D" id="3.30.200.20">
    <property type="entry name" value="Phosphorylase Kinase, domain 1"/>
    <property type="match status" value="1"/>
</dbReference>
<dbReference type="Gene3D" id="3.40.50.150">
    <property type="entry name" value="Vaccinia Virus protein VP39"/>
    <property type="match status" value="1"/>
</dbReference>
<dbReference type="HAMAP" id="MF_00351">
    <property type="entry name" value="RNA_methyltransf_FlpA"/>
    <property type="match status" value="1"/>
</dbReference>
<dbReference type="InterPro" id="IPR000692">
    <property type="entry name" value="Fibrillarin"/>
</dbReference>
<dbReference type="InterPro" id="IPR020813">
    <property type="entry name" value="Fibrillarin_CS"/>
</dbReference>
<dbReference type="InterPro" id="IPR029063">
    <property type="entry name" value="SAM-dependent_MTases_sf"/>
</dbReference>
<dbReference type="NCBIfam" id="NF003276">
    <property type="entry name" value="PRK04266.1-2"/>
    <property type="match status" value="1"/>
</dbReference>
<dbReference type="PANTHER" id="PTHR10335:SF17">
    <property type="entry name" value="FIBRILLARIN"/>
    <property type="match status" value="1"/>
</dbReference>
<dbReference type="PANTHER" id="PTHR10335">
    <property type="entry name" value="RRNA 2-O-METHYLTRANSFERASE FIBRILLARIN"/>
    <property type="match status" value="1"/>
</dbReference>
<dbReference type="Pfam" id="PF01269">
    <property type="entry name" value="Fibrillarin"/>
    <property type="match status" value="1"/>
</dbReference>
<dbReference type="PRINTS" id="PR00052">
    <property type="entry name" value="FIBRILLARIN"/>
</dbReference>
<dbReference type="SMART" id="SM01206">
    <property type="entry name" value="Fibrillarin"/>
    <property type="match status" value="1"/>
</dbReference>
<dbReference type="SUPFAM" id="SSF53335">
    <property type="entry name" value="S-adenosyl-L-methionine-dependent methyltransferases"/>
    <property type="match status" value="1"/>
</dbReference>
<dbReference type="PROSITE" id="PS00566">
    <property type="entry name" value="FIBRILLARIN"/>
    <property type="match status" value="1"/>
</dbReference>
<reference key="1">
    <citation type="journal article" date="1998" name="Science">
        <title>Genome sequence of the nematode C. elegans: a platform for investigating biology.</title>
        <authorList>
            <consortium name="The C. elegans sequencing consortium"/>
        </authorList>
    </citation>
    <scope>NUCLEOTIDE SEQUENCE [LARGE SCALE GENOMIC DNA]</scope>
    <source>
        <strain>Bristol N2</strain>
    </source>
</reference>
<reference key="2">
    <citation type="journal article" date="2012" name="PLoS ONE">
        <title>Nucleologenesis in the Caenorhabditis elegans embryo.</title>
        <authorList>
            <person name="Korcekova D."/>
            <person name="Gombitova A."/>
            <person name="Raska I."/>
            <person name="Cmarko D."/>
            <person name="Lanctot C."/>
        </authorList>
    </citation>
    <scope>SUBCELLULAR LOCATION</scope>
    <scope>DEVELOPMENTAL STAGE</scope>
</reference>
<reference key="3">
    <citation type="journal article" date="2015" name="PLoS Genet.">
        <title>A Genetic Cascade of let-7-ncl-1-fib-1 Modulates Nucleolar Size and rRNA Pool in Caenorhabditis elegans.</title>
        <authorList>
            <person name="Yi Y.H."/>
            <person name="Ma T.H."/>
            <person name="Lee L.W."/>
            <person name="Chiou P.T."/>
            <person name="Chen P.H."/>
            <person name="Lee C.M."/>
            <person name="Chu Y.D."/>
            <person name="Yu H."/>
            <person name="Hsiung K.C."/>
            <person name="Tsai Y.T."/>
            <person name="Lee C.C."/>
            <person name="Chang Y.S."/>
            <person name="Chan S.P."/>
            <person name="Tan B.C."/>
            <person name="Lo S.J."/>
        </authorList>
    </citation>
    <scope>FUNCTION</scope>
    <scope>DISRUPTION PHENOTYPE</scope>
</reference>
<reference key="4">
    <citation type="journal article" date="2022" name="Nat. Commun.">
        <title>RG/RGG repeats in the C. elegans homologs of Nucleolin and GAR1 contribute to sub-nucleolar phase separation.</title>
        <authorList>
            <person name="Spaulding E.L."/>
            <person name="Feidler A.M."/>
            <person name="Cook L.A."/>
            <person name="Updike D.L."/>
        </authorList>
    </citation>
    <scope>SUBCELLULAR LOCATION</scope>
</reference>
<keyword id="KW-0488">Methylation</keyword>
<keyword id="KW-0489">Methyltransferase</keyword>
<keyword id="KW-0539">Nucleus</keyword>
<keyword id="KW-1185">Reference proteome</keyword>
<keyword id="KW-0687">Ribonucleoprotein</keyword>
<keyword id="KW-0694">RNA-binding</keyword>
<keyword id="KW-0698">rRNA processing</keyword>
<keyword id="KW-0949">S-adenosyl-L-methionine</keyword>
<keyword id="KW-0808">Transferase</keyword>
<comment type="function">
    <text evidence="2 5">S-adenosyl-L-methionine-dependent methyltransferase that has the ability to methylate both RNAs and proteins (By similarity). Involved in pre-rRNA processing. Utilizes the methyl donor S-adenosyl-L-methionine to catalyze the site-specific 2'-hydroxyl methylation of ribose moieties in pre-ribosomal RNA (By similarity). Site specificity is provided by a guide RNA that base pairs with the substrate. Methylation occurs at a characteristic distance from the sequence involved in base pairing with the guide RNA (By similarity). Also acts as a protein methyltransferase by mediating methylation of 'Gln-105' of histone H2A (H2AQ105me), a modification that impairs binding of the FACT complex and is specifically present at 35S ribosomal DNA locus (By similarity). Plays a role in modulation of nucleolus size most likely through regulating the ribosomal RNA (rRNA) pool (PubMed:26492166).</text>
</comment>
<comment type="catalytic activity">
    <reaction evidence="2">
        <text>L-glutaminyl-[histone H2A] + S-adenosyl-L-methionine = N(5)-methyl-L-glutaminyl-[histone H2A] + S-adenosyl-L-homocysteine + H(+)</text>
        <dbReference type="Rhea" id="RHEA:50904"/>
        <dbReference type="Rhea" id="RHEA-COMP:12837"/>
        <dbReference type="Rhea" id="RHEA-COMP:12839"/>
        <dbReference type="ChEBI" id="CHEBI:15378"/>
        <dbReference type="ChEBI" id="CHEBI:30011"/>
        <dbReference type="ChEBI" id="CHEBI:57856"/>
        <dbReference type="ChEBI" id="CHEBI:59789"/>
        <dbReference type="ChEBI" id="CHEBI:61891"/>
    </reaction>
</comment>
<comment type="subunit">
    <text evidence="1">Component of box C/D small nucleolar ribonucleoprotein (snoRNP) particles. It is associated with the U3, U8 and U13 small nuclear RNAs.</text>
</comment>
<comment type="subcellular location">
    <subcellularLocation>
        <location evidence="4 6">Nucleus</location>
        <location evidence="4 6">Nucleolus</location>
    </subcellularLocation>
    <subcellularLocation>
        <location evidence="4">Nucleus</location>
        <location evidence="4">Nucleoplasm</location>
    </subcellularLocation>
    <text evidence="4 6">Fibrillar region of the nucleolus. Predominantly localizes to the nucleolus, but also localizes to small punctate structures throughout the nucleoplasm. Co-localizes with dao-5 in nucleoli. Localizes to a sub-nucleolar compartment in pachytene germ cells (PubMed:36329008). Co-localizes with garr-1 in nucleoli (PubMed:36329008).</text>
</comment>
<comment type="developmental stage">
    <text evidence="4">Expressed throughout embryonic development and in adults. During embryogenesis, expressed from the 2-cell stage and persists throughout development in nucleoli containing cells.</text>
</comment>
<comment type="PTM">
    <text evidence="1">By homology to other fibrillarins, some or all of the N-terminal domain arginines are modified to asymmetric dimethylarginine (DMA).</text>
</comment>
<comment type="disruption phenotype">
    <text evidence="5">RNAi-mediated knockdown results in reduced 26S ribosomal RNA (rRNA) expression. RNAi-mediated knockdown in a ncl-1 (e1942) mutant background suppresses the enlarged nucleoli phenotype in the single ncl-1 mutant. RNAi-mediated knockdown in a ncl-1 (e1942) mutant background suppresses the increased 26S rRNA expression in the single ncl-1 mutant.</text>
</comment>
<comment type="similarity">
    <text evidence="7">Belongs to the methyltransferase superfamily. Fibrillarin family.</text>
</comment>